<feature type="chain" id="PRO_0000347820" description="Alanine--tRNA ligase">
    <location>
        <begin position="1"/>
        <end position="872"/>
    </location>
</feature>
<feature type="binding site" evidence="1">
    <location>
        <position position="567"/>
    </location>
    <ligand>
        <name>Zn(2+)</name>
        <dbReference type="ChEBI" id="CHEBI:29105"/>
    </ligand>
</feature>
<feature type="binding site" evidence="1">
    <location>
        <position position="571"/>
    </location>
    <ligand>
        <name>Zn(2+)</name>
        <dbReference type="ChEBI" id="CHEBI:29105"/>
    </ligand>
</feature>
<feature type="binding site" evidence="1">
    <location>
        <position position="669"/>
    </location>
    <ligand>
        <name>Zn(2+)</name>
        <dbReference type="ChEBI" id="CHEBI:29105"/>
    </ligand>
</feature>
<feature type="binding site" evidence="1">
    <location>
        <position position="673"/>
    </location>
    <ligand>
        <name>Zn(2+)</name>
        <dbReference type="ChEBI" id="CHEBI:29105"/>
    </ligand>
</feature>
<reference key="1">
    <citation type="journal article" date="2010" name="Genome Biol.">
        <title>Structure and dynamics of the pan-genome of Streptococcus pneumoniae and closely related species.</title>
        <authorList>
            <person name="Donati C."/>
            <person name="Hiller N.L."/>
            <person name="Tettelin H."/>
            <person name="Muzzi A."/>
            <person name="Croucher N.J."/>
            <person name="Angiuoli S.V."/>
            <person name="Oggioni M."/>
            <person name="Dunning Hotopp J.C."/>
            <person name="Hu F.Z."/>
            <person name="Riley D.R."/>
            <person name="Covacci A."/>
            <person name="Mitchell T.J."/>
            <person name="Bentley S.D."/>
            <person name="Kilian M."/>
            <person name="Ehrlich G.D."/>
            <person name="Rappuoli R."/>
            <person name="Moxon E.R."/>
            <person name="Masignani V."/>
        </authorList>
    </citation>
    <scope>NUCLEOTIDE SEQUENCE [LARGE SCALE GENOMIC DNA]</scope>
    <source>
        <strain>Hungary19A-6</strain>
    </source>
</reference>
<accession>B1ICI3</accession>
<keyword id="KW-0030">Aminoacyl-tRNA synthetase</keyword>
<keyword id="KW-0067">ATP-binding</keyword>
<keyword id="KW-0963">Cytoplasm</keyword>
<keyword id="KW-0436">Ligase</keyword>
<keyword id="KW-0479">Metal-binding</keyword>
<keyword id="KW-0547">Nucleotide-binding</keyword>
<keyword id="KW-0648">Protein biosynthesis</keyword>
<keyword id="KW-0694">RNA-binding</keyword>
<keyword id="KW-0820">tRNA-binding</keyword>
<keyword id="KW-0862">Zinc</keyword>
<dbReference type="EC" id="6.1.1.7" evidence="1"/>
<dbReference type="EMBL" id="CP000936">
    <property type="protein sequence ID" value="ACA36164.1"/>
    <property type="molecule type" value="Genomic_DNA"/>
</dbReference>
<dbReference type="RefSeq" id="WP_000811743.1">
    <property type="nucleotide sequence ID" value="NC_010380.1"/>
</dbReference>
<dbReference type="SMR" id="B1ICI3"/>
<dbReference type="KEGG" id="spv:SPH_1514"/>
<dbReference type="HOGENOM" id="CLU_004485_1_1_9"/>
<dbReference type="Proteomes" id="UP000002163">
    <property type="component" value="Chromosome"/>
</dbReference>
<dbReference type="GO" id="GO:0005829">
    <property type="term" value="C:cytosol"/>
    <property type="evidence" value="ECO:0007669"/>
    <property type="project" value="TreeGrafter"/>
</dbReference>
<dbReference type="GO" id="GO:0004813">
    <property type="term" value="F:alanine-tRNA ligase activity"/>
    <property type="evidence" value="ECO:0007669"/>
    <property type="project" value="UniProtKB-UniRule"/>
</dbReference>
<dbReference type="GO" id="GO:0002161">
    <property type="term" value="F:aminoacyl-tRNA deacylase activity"/>
    <property type="evidence" value="ECO:0007669"/>
    <property type="project" value="TreeGrafter"/>
</dbReference>
<dbReference type="GO" id="GO:0005524">
    <property type="term" value="F:ATP binding"/>
    <property type="evidence" value="ECO:0007669"/>
    <property type="project" value="UniProtKB-UniRule"/>
</dbReference>
<dbReference type="GO" id="GO:0140096">
    <property type="term" value="F:catalytic activity, acting on a protein"/>
    <property type="evidence" value="ECO:0007669"/>
    <property type="project" value="UniProtKB-ARBA"/>
</dbReference>
<dbReference type="GO" id="GO:0016740">
    <property type="term" value="F:transferase activity"/>
    <property type="evidence" value="ECO:0007669"/>
    <property type="project" value="UniProtKB-ARBA"/>
</dbReference>
<dbReference type="GO" id="GO:0000049">
    <property type="term" value="F:tRNA binding"/>
    <property type="evidence" value="ECO:0007669"/>
    <property type="project" value="UniProtKB-KW"/>
</dbReference>
<dbReference type="GO" id="GO:0008270">
    <property type="term" value="F:zinc ion binding"/>
    <property type="evidence" value="ECO:0007669"/>
    <property type="project" value="UniProtKB-UniRule"/>
</dbReference>
<dbReference type="GO" id="GO:0006419">
    <property type="term" value="P:alanyl-tRNA aminoacylation"/>
    <property type="evidence" value="ECO:0007669"/>
    <property type="project" value="UniProtKB-UniRule"/>
</dbReference>
<dbReference type="CDD" id="cd00673">
    <property type="entry name" value="AlaRS_core"/>
    <property type="match status" value="1"/>
</dbReference>
<dbReference type="FunFam" id="3.10.310.40:FF:000001">
    <property type="entry name" value="Alanine--tRNA ligase"/>
    <property type="match status" value="1"/>
</dbReference>
<dbReference type="FunFam" id="3.30.54.20:FF:000001">
    <property type="entry name" value="Alanine--tRNA ligase"/>
    <property type="match status" value="1"/>
</dbReference>
<dbReference type="FunFam" id="3.30.930.10:FF:000046">
    <property type="entry name" value="Alanine--tRNA ligase"/>
    <property type="match status" value="1"/>
</dbReference>
<dbReference type="FunFam" id="3.30.980.10:FF:000004">
    <property type="entry name" value="Alanine--tRNA ligase, cytoplasmic"/>
    <property type="match status" value="1"/>
</dbReference>
<dbReference type="Gene3D" id="2.40.30.130">
    <property type="match status" value="1"/>
</dbReference>
<dbReference type="Gene3D" id="3.10.310.40">
    <property type="match status" value="1"/>
</dbReference>
<dbReference type="Gene3D" id="3.30.54.20">
    <property type="match status" value="1"/>
</dbReference>
<dbReference type="Gene3D" id="6.10.250.550">
    <property type="match status" value="1"/>
</dbReference>
<dbReference type="Gene3D" id="3.30.930.10">
    <property type="entry name" value="Bira Bifunctional Protein, Domain 2"/>
    <property type="match status" value="1"/>
</dbReference>
<dbReference type="Gene3D" id="3.30.980.10">
    <property type="entry name" value="Threonyl-trna Synthetase, Chain A, domain 2"/>
    <property type="match status" value="1"/>
</dbReference>
<dbReference type="HAMAP" id="MF_00036_B">
    <property type="entry name" value="Ala_tRNA_synth_B"/>
    <property type="match status" value="1"/>
</dbReference>
<dbReference type="InterPro" id="IPR045864">
    <property type="entry name" value="aa-tRNA-synth_II/BPL/LPL"/>
</dbReference>
<dbReference type="InterPro" id="IPR002318">
    <property type="entry name" value="Ala-tRNA-lgiase_IIc"/>
</dbReference>
<dbReference type="InterPro" id="IPR018162">
    <property type="entry name" value="Ala-tRNA-ligase_IIc_anticod-bd"/>
</dbReference>
<dbReference type="InterPro" id="IPR018165">
    <property type="entry name" value="Ala-tRNA-synth_IIc_core"/>
</dbReference>
<dbReference type="InterPro" id="IPR018164">
    <property type="entry name" value="Ala-tRNA-synth_IIc_N"/>
</dbReference>
<dbReference type="InterPro" id="IPR050058">
    <property type="entry name" value="Ala-tRNA_ligase"/>
</dbReference>
<dbReference type="InterPro" id="IPR023033">
    <property type="entry name" value="Ala_tRNA_ligase_euk/bac"/>
</dbReference>
<dbReference type="InterPro" id="IPR003156">
    <property type="entry name" value="DHHA1_dom"/>
</dbReference>
<dbReference type="InterPro" id="IPR018163">
    <property type="entry name" value="Thr/Ala-tRNA-synth_IIc_edit"/>
</dbReference>
<dbReference type="InterPro" id="IPR009000">
    <property type="entry name" value="Transl_B-barrel_sf"/>
</dbReference>
<dbReference type="InterPro" id="IPR012947">
    <property type="entry name" value="tRNA_SAD"/>
</dbReference>
<dbReference type="NCBIfam" id="TIGR00344">
    <property type="entry name" value="alaS"/>
    <property type="match status" value="1"/>
</dbReference>
<dbReference type="PANTHER" id="PTHR11777:SF9">
    <property type="entry name" value="ALANINE--TRNA LIGASE, CYTOPLASMIC"/>
    <property type="match status" value="1"/>
</dbReference>
<dbReference type="PANTHER" id="PTHR11777">
    <property type="entry name" value="ALANYL-TRNA SYNTHETASE"/>
    <property type="match status" value="1"/>
</dbReference>
<dbReference type="Pfam" id="PF02272">
    <property type="entry name" value="DHHA1"/>
    <property type="match status" value="1"/>
</dbReference>
<dbReference type="Pfam" id="PF01411">
    <property type="entry name" value="tRNA-synt_2c"/>
    <property type="match status" value="1"/>
</dbReference>
<dbReference type="Pfam" id="PF07973">
    <property type="entry name" value="tRNA_SAD"/>
    <property type="match status" value="1"/>
</dbReference>
<dbReference type="PRINTS" id="PR00980">
    <property type="entry name" value="TRNASYNTHALA"/>
</dbReference>
<dbReference type="SMART" id="SM00863">
    <property type="entry name" value="tRNA_SAD"/>
    <property type="match status" value="1"/>
</dbReference>
<dbReference type="SUPFAM" id="SSF55681">
    <property type="entry name" value="Class II aaRS and biotin synthetases"/>
    <property type="match status" value="1"/>
</dbReference>
<dbReference type="SUPFAM" id="SSF101353">
    <property type="entry name" value="Putative anticodon-binding domain of alanyl-tRNA synthetase (AlaRS)"/>
    <property type="match status" value="1"/>
</dbReference>
<dbReference type="SUPFAM" id="SSF55186">
    <property type="entry name" value="ThrRS/AlaRS common domain"/>
    <property type="match status" value="1"/>
</dbReference>
<dbReference type="SUPFAM" id="SSF50447">
    <property type="entry name" value="Translation proteins"/>
    <property type="match status" value="1"/>
</dbReference>
<dbReference type="PROSITE" id="PS50860">
    <property type="entry name" value="AA_TRNA_LIGASE_II_ALA"/>
    <property type="match status" value="1"/>
</dbReference>
<organism>
    <name type="scientific">Streptococcus pneumoniae (strain Hungary19A-6)</name>
    <dbReference type="NCBI Taxonomy" id="487214"/>
    <lineage>
        <taxon>Bacteria</taxon>
        <taxon>Bacillati</taxon>
        <taxon>Bacillota</taxon>
        <taxon>Bacilli</taxon>
        <taxon>Lactobacillales</taxon>
        <taxon>Streptococcaceae</taxon>
        <taxon>Streptococcus</taxon>
    </lineage>
</organism>
<protein>
    <recommendedName>
        <fullName evidence="1">Alanine--tRNA ligase</fullName>
        <ecNumber evidence="1">6.1.1.7</ecNumber>
    </recommendedName>
    <alternativeName>
        <fullName evidence="1">Alanyl-tRNA synthetase</fullName>
        <shortName evidence="1">AlaRS</shortName>
    </alternativeName>
</protein>
<comment type="function">
    <text evidence="1">Catalyzes the attachment of alanine to tRNA(Ala) in a two-step reaction: alanine is first activated by ATP to form Ala-AMP and then transferred to the acceptor end of tRNA(Ala). Also edits incorrectly charged Ser-tRNA(Ala) and Gly-tRNA(Ala) via its editing domain.</text>
</comment>
<comment type="catalytic activity">
    <reaction evidence="1">
        <text>tRNA(Ala) + L-alanine + ATP = L-alanyl-tRNA(Ala) + AMP + diphosphate</text>
        <dbReference type="Rhea" id="RHEA:12540"/>
        <dbReference type="Rhea" id="RHEA-COMP:9657"/>
        <dbReference type="Rhea" id="RHEA-COMP:9923"/>
        <dbReference type="ChEBI" id="CHEBI:30616"/>
        <dbReference type="ChEBI" id="CHEBI:33019"/>
        <dbReference type="ChEBI" id="CHEBI:57972"/>
        <dbReference type="ChEBI" id="CHEBI:78442"/>
        <dbReference type="ChEBI" id="CHEBI:78497"/>
        <dbReference type="ChEBI" id="CHEBI:456215"/>
        <dbReference type="EC" id="6.1.1.7"/>
    </reaction>
</comment>
<comment type="cofactor">
    <cofactor evidence="1">
        <name>Zn(2+)</name>
        <dbReference type="ChEBI" id="CHEBI:29105"/>
    </cofactor>
    <text evidence="1">Binds 1 zinc ion per subunit.</text>
</comment>
<comment type="subcellular location">
    <subcellularLocation>
        <location evidence="1">Cytoplasm</location>
    </subcellularLocation>
</comment>
<comment type="domain">
    <text evidence="1">Consists of three domains; the N-terminal catalytic domain, the editing domain and the C-terminal C-Ala domain. The editing domain removes incorrectly charged amino acids, while the C-Ala domain, along with tRNA(Ala), serves as a bridge to cooperatively bring together the editing and aminoacylation centers thus stimulating deacylation of misacylated tRNAs.</text>
</comment>
<comment type="similarity">
    <text evidence="1">Belongs to the class-II aminoacyl-tRNA synthetase family.</text>
</comment>
<name>SYA_STRPI</name>
<gene>
    <name evidence="1" type="primary">alaS</name>
    <name type="ordered locus">SPH_1514</name>
</gene>
<proteinExistence type="inferred from homology"/>
<evidence type="ECO:0000255" key="1">
    <source>
        <dbReference type="HAMAP-Rule" id="MF_00036"/>
    </source>
</evidence>
<sequence length="872" mass="96469">MKQLSSAQVRQMWLDFWATKGHSVEPSVSLVPVNDPTLLWINSGVATLKKYFDGTIIPENPRITNAQKAIRTNDIENVGKTARHHTMFEMLGNFSIGDYFRDEAITWAYELLTSPEWFDFPAEKLYMTYYPDDKDSYNRWIEVGVDPSHLIPIEDNFWEIGAGPSGPDTEIFFDRGEAFDPENIGLRLLAEDIENDRYIEIWNIVLSQFNADPAVPRSEYKELPHKNIDTGAGLERLVAVIQGAKTNFETDLFMPIIREVEKLSGKVYDQDGDNMSFKVIADHIRSLSFAIGDGALPGNEGRGYVLRRLLRRASMHGQKLGINEPFLYKLVPTVGKIMESYYPEVLEKRDFIEKIVKSEEESFARTLHSGQHFAQGIVADLKEKGQSVIAGQDVFKLYDTYGFPVELTEEIAEEAGMTVDREGFEAAMKEQQERARASAVKGGSMGMQNETLQNITVESVFNHNASQLSSKLVAIVADNAEVEAVSEGTTSLIFAETPFYAEMGGQVADHGQILDESGKVVATVTNVQKAPNGQALHTVEVLAPLALNQEYTLAIDSNRRHRVMKNHTATHLLHAALHNILGNHATQAGSLNEVEFLRFDFTHFQAVTAEELRAIEQQVNEKIWEALEVKTVETDIDTAKEMGAMALFGEKYGKEVRVVTIGDYSIELCGGTHVGNTSEIGLFKIVKEEGIGSGTRRILAVTGKEAFEAYREQEDALKAVAATLKAPQVKEVPHKVEGLQEQLRQLQKENAELKEKAAAAAAGDIFKDVKEVNGHRYIASQVSVSDAGALRTFADNWKQKDYSDLLVLVAAIGDKVNVLVASKTKDLHAGNLVKELAPIIDGRGGGKPDMAMAGGSNQPKIQELLDAVAGKL</sequence>